<organism>
    <name type="scientific">Coxiella burnetii (strain RSA 493 / Nine Mile phase I)</name>
    <dbReference type="NCBI Taxonomy" id="227377"/>
    <lineage>
        <taxon>Bacteria</taxon>
        <taxon>Pseudomonadati</taxon>
        <taxon>Pseudomonadota</taxon>
        <taxon>Gammaproteobacteria</taxon>
        <taxon>Legionellales</taxon>
        <taxon>Coxiellaceae</taxon>
        <taxon>Coxiella</taxon>
    </lineage>
</organism>
<proteinExistence type="inferred from homology"/>
<name>ATPB_COXBU</name>
<feature type="chain" id="PRO_0000254247" description="ATP synthase subunit beta">
    <location>
        <begin position="1"/>
        <end position="461"/>
    </location>
</feature>
<feature type="binding site" evidence="1">
    <location>
        <begin position="151"/>
        <end position="158"/>
    </location>
    <ligand>
        <name>ATP</name>
        <dbReference type="ChEBI" id="CHEBI:30616"/>
    </ligand>
</feature>
<reference key="1">
    <citation type="journal article" date="2003" name="Proc. Natl. Acad. Sci. U.S.A.">
        <title>Complete genome sequence of the Q-fever pathogen, Coxiella burnetii.</title>
        <authorList>
            <person name="Seshadri R."/>
            <person name="Paulsen I.T."/>
            <person name="Eisen J.A."/>
            <person name="Read T.D."/>
            <person name="Nelson K.E."/>
            <person name="Nelson W.C."/>
            <person name="Ward N.L."/>
            <person name="Tettelin H."/>
            <person name="Davidsen T.M."/>
            <person name="Beanan M.J."/>
            <person name="DeBoy R.T."/>
            <person name="Daugherty S.C."/>
            <person name="Brinkac L.M."/>
            <person name="Madupu R."/>
            <person name="Dodson R.J."/>
            <person name="Khouri H.M."/>
            <person name="Lee K.H."/>
            <person name="Carty H.A."/>
            <person name="Scanlan D."/>
            <person name="Heinzen R.A."/>
            <person name="Thompson H.A."/>
            <person name="Samuel J.E."/>
            <person name="Fraser C.M."/>
            <person name="Heidelberg J.F."/>
        </authorList>
    </citation>
    <scope>NUCLEOTIDE SEQUENCE [LARGE SCALE GENOMIC DNA]</scope>
    <source>
        <strain>RSA 493 / Nine Mile phase I</strain>
    </source>
</reference>
<dbReference type="EC" id="7.1.2.2" evidence="1"/>
<dbReference type="EMBL" id="AE016828">
    <property type="protein sequence ID" value="AAO91435.2"/>
    <property type="status" value="ALT_INIT"/>
    <property type="molecule type" value="Genomic_DNA"/>
</dbReference>
<dbReference type="RefSeq" id="NP_820921.2">
    <property type="nucleotide sequence ID" value="NC_002971.3"/>
</dbReference>
<dbReference type="SMR" id="Q83AF5"/>
<dbReference type="STRING" id="227377.CBU_1945"/>
<dbReference type="EnsemblBacteria" id="AAO91435">
    <property type="protein sequence ID" value="AAO91435"/>
    <property type="gene ID" value="CBU_1945"/>
</dbReference>
<dbReference type="GeneID" id="1209858"/>
<dbReference type="KEGG" id="cbu:CBU_1945"/>
<dbReference type="PATRIC" id="fig|227377.7.peg.1931"/>
<dbReference type="eggNOG" id="COG0055">
    <property type="taxonomic scope" value="Bacteria"/>
</dbReference>
<dbReference type="HOGENOM" id="CLU_022398_0_2_6"/>
<dbReference type="OrthoDB" id="9801639at2"/>
<dbReference type="Proteomes" id="UP000002671">
    <property type="component" value="Chromosome"/>
</dbReference>
<dbReference type="GO" id="GO:0005886">
    <property type="term" value="C:plasma membrane"/>
    <property type="evidence" value="ECO:0007669"/>
    <property type="project" value="UniProtKB-SubCell"/>
</dbReference>
<dbReference type="GO" id="GO:0045259">
    <property type="term" value="C:proton-transporting ATP synthase complex"/>
    <property type="evidence" value="ECO:0007669"/>
    <property type="project" value="UniProtKB-KW"/>
</dbReference>
<dbReference type="GO" id="GO:0005524">
    <property type="term" value="F:ATP binding"/>
    <property type="evidence" value="ECO:0007669"/>
    <property type="project" value="UniProtKB-UniRule"/>
</dbReference>
<dbReference type="GO" id="GO:0016887">
    <property type="term" value="F:ATP hydrolysis activity"/>
    <property type="evidence" value="ECO:0007669"/>
    <property type="project" value="InterPro"/>
</dbReference>
<dbReference type="GO" id="GO:0046933">
    <property type="term" value="F:proton-transporting ATP synthase activity, rotational mechanism"/>
    <property type="evidence" value="ECO:0007669"/>
    <property type="project" value="UniProtKB-UniRule"/>
</dbReference>
<dbReference type="CDD" id="cd18110">
    <property type="entry name" value="ATP-synt_F1_beta_C"/>
    <property type="match status" value="1"/>
</dbReference>
<dbReference type="CDD" id="cd18115">
    <property type="entry name" value="ATP-synt_F1_beta_N"/>
    <property type="match status" value="1"/>
</dbReference>
<dbReference type="CDD" id="cd01133">
    <property type="entry name" value="F1-ATPase_beta_CD"/>
    <property type="match status" value="1"/>
</dbReference>
<dbReference type="FunFam" id="1.10.1140.10:FF:000001">
    <property type="entry name" value="ATP synthase subunit beta"/>
    <property type="match status" value="1"/>
</dbReference>
<dbReference type="FunFam" id="3.40.50.300:FF:000004">
    <property type="entry name" value="ATP synthase subunit beta"/>
    <property type="match status" value="1"/>
</dbReference>
<dbReference type="Gene3D" id="2.40.10.170">
    <property type="match status" value="1"/>
</dbReference>
<dbReference type="Gene3D" id="1.10.1140.10">
    <property type="entry name" value="Bovine Mitochondrial F1-atpase, Atp Synthase Beta Chain, Chain D, domain 3"/>
    <property type="match status" value="1"/>
</dbReference>
<dbReference type="Gene3D" id="3.40.50.300">
    <property type="entry name" value="P-loop containing nucleotide triphosphate hydrolases"/>
    <property type="match status" value="1"/>
</dbReference>
<dbReference type="HAMAP" id="MF_01347">
    <property type="entry name" value="ATP_synth_beta_bact"/>
    <property type="match status" value="1"/>
</dbReference>
<dbReference type="InterPro" id="IPR003593">
    <property type="entry name" value="AAA+_ATPase"/>
</dbReference>
<dbReference type="InterPro" id="IPR055190">
    <property type="entry name" value="ATP-synt_VA_C"/>
</dbReference>
<dbReference type="InterPro" id="IPR005722">
    <property type="entry name" value="ATP_synth_F1_bsu"/>
</dbReference>
<dbReference type="InterPro" id="IPR020003">
    <property type="entry name" value="ATPase_a/bsu_AS"/>
</dbReference>
<dbReference type="InterPro" id="IPR050053">
    <property type="entry name" value="ATPase_alpha/beta_chains"/>
</dbReference>
<dbReference type="InterPro" id="IPR004100">
    <property type="entry name" value="ATPase_F1/V1/A1_a/bsu_N"/>
</dbReference>
<dbReference type="InterPro" id="IPR036121">
    <property type="entry name" value="ATPase_F1/V1/A1_a/bsu_N_sf"/>
</dbReference>
<dbReference type="InterPro" id="IPR000194">
    <property type="entry name" value="ATPase_F1/V1/A1_a/bsu_nucl-bd"/>
</dbReference>
<dbReference type="InterPro" id="IPR024034">
    <property type="entry name" value="ATPase_F1/V1_b/a_C"/>
</dbReference>
<dbReference type="InterPro" id="IPR027417">
    <property type="entry name" value="P-loop_NTPase"/>
</dbReference>
<dbReference type="NCBIfam" id="TIGR01039">
    <property type="entry name" value="atpD"/>
    <property type="match status" value="1"/>
</dbReference>
<dbReference type="PANTHER" id="PTHR15184">
    <property type="entry name" value="ATP SYNTHASE"/>
    <property type="match status" value="1"/>
</dbReference>
<dbReference type="PANTHER" id="PTHR15184:SF71">
    <property type="entry name" value="ATP SYNTHASE SUBUNIT BETA, MITOCHONDRIAL"/>
    <property type="match status" value="1"/>
</dbReference>
<dbReference type="Pfam" id="PF00006">
    <property type="entry name" value="ATP-synt_ab"/>
    <property type="match status" value="1"/>
</dbReference>
<dbReference type="Pfam" id="PF02874">
    <property type="entry name" value="ATP-synt_ab_N"/>
    <property type="match status" value="1"/>
</dbReference>
<dbReference type="Pfam" id="PF22919">
    <property type="entry name" value="ATP-synt_VA_C"/>
    <property type="match status" value="1"/>
</dbReference>
<dbReference type="SMART" id="SM00382">
    <property type="entry name" value="AAA"/>
    <property type="match status" value="1"/>
</dbReference>
<dbReference type="SUPFAM" id="SSF47917">
    <property type="entry name" value="C-terminal domain of alpha and beta subunits of F1 ATP synthase"/>
    <property type="match status" value="1"/>
</dbReference>
<dbReference type="SUPFAM" id="SSF50615">
    <property type="entry name" value="N-terminal domain of alpha and beta subunits of F1 ATP synthase"/>
    <property type="match status" value="1"/>
</dbReference>
<dbReference type="SUPFAM" id="SSF52540">
    <property type="entry name" value="P-loop containing nucleoside triphosphate hydrolases"/>
    <property type="match status" value="1"/>
</dbReference>
<dbReference type="PROSITE" id="PS00152">
    <property type="entry name" value="ATPASE_ALPHA_BETA"/>
    <property type="match status" value="1"/>
</dbReference>
<evidence type="ECO:0000255" key="1">
    <source>
        <dbReference type="HAMAP-Rule" id="MF_01347"/>
    </source>
</evidence>
<evidence type="ECO:0000305" key="2"/>
<protein>
    <recommendedName>
        <fullName evidence="1">ATP synthase subunit beta</fullName>
        <ecNumber evidence="1">7.1.2.2</ecNumber>
    </recommendedName>
    <alternativeName>
        <fullName evidence="1">ATP synthase F1 sector subunit beta</fullName>
    </alternativeName>
    <alternativeName>
        <fullName evidence="1">F-ATPase subunit beta</fullName>
    </alternativeName>
</protein>
<accession>Q83AF5</accession>
<comment type="function">
    <text evidence="1">Produces ATP from ADP in the presence of a proton gradient across the membrane. The catalytic sites are hosted primarily by the beta subunits.</text>
</comment>
<comment type="catalytic activity">
    <reaction evidence="1">
        <text>ATP + H2O + 4 H(+)(in) = ADP + phosphate + 5 H(+)(out)</text>
        <dbReference type="Rhea" id="RHEA:57720"/>
        <dbReference type="ChEBI" id="CHEBI:15377"/>
        <dbReference type="ChEBI" id="CHEBI:15378"/>
        <dbReference type="ChEBI" id="CHEBI:30616"/>
        <dbReference type="ChEBI" id="CHEBI:43474"/>
        <dbReference type="ChEBI" id="CHEBI:456216"/>
        <dbReference type="EC" id="7.1.2.2"/>
    </reaction>
</comment>
<comment type="subunit">
    <text evidence="1">F-type ATPases have 2 components, CF(1) - the catalytic core - and CF(0) - the membrane proton channel. CF(1) has five subunits: alpha(3), beta(3), gamma(1), delta(1), epsilon(1). CF(0) has three main subunits: a(1), b(2) and c(9-12). The alpha and beta chains form an alternating ring which encloses part of the gamma chain. CF(1) is attached to CF(0) by a central stalk formed by the gamma and epsilon chains, while a peripheral stalk is formed by the delta and b chains.</text>
</comment>
<comment type="subcellular location">
    <subcellularLocation>
        <location evidence="1">Cell inner membrane</location>
        <topology evidence="1">Peripheral membrane protein</topology>
    </subcellularLocation>
</comment>
<comment type="similarity">
    <text evidence="1">Belongs to the ATPase alpha/beta chains family.</text>
</comment>
<comment type="sequence caution" evidence="2">
    <conflict type="erroneous initiation">
        <sequence resource="EMBL-CDS" id="AAO91435"/>
    </conflict>
</comment>
<keyword id="KW-0066">ATP synthesis</keyword>
<keyword id="KW-0067">ATP-binding</keyword>
<keyword id="KW-0997">Cell inner membrane</keyword>
<keyword id="KW-1003">Cell membrane</keyword>
<keyword id="KW-0139">CF(1)</keyword>
<keyword id="KW-0375">Hydrogen ion transport</keyword>
<keyword id="KW-0406">Ion transport</keyword>
<keyword id="KW-0472">Membrane</keyword>
<keyword id="KW-0547">Nucleotide-binding</keyword>
<keyword id="KW-1185">Reference proteome</keyword>
<keyword id="KW-1278">Translocase</keyword>
<keyword id="KW-0813">Transport</keyword>
<sequence>MTTAKSGTTIEIIGAVVDVEFPRHAVPKVYDALQVDENNLTLEVQQQLGDGVVRTIAMGSTEGLKRDIAVKNTEKPIEVPVGKETLGRIMNVLGEPIDELGPINSKEKLPIHRPAPSFIEQSGATELLETGIKVVDLLCPFAKGGKVGLFGGAGVGKTVNMMELIRNIAIEHSGYSVFAGVGERTREGNDFYHEMKESNVLDKVALVYGQMNEPPGNRLRVGLTGLTLAEAFRDEGRDVLLFIDNIFRYTLAGVEVSALLGRMPSAVGYQPTLAEEMGALQERITSTKKGSITSIQAVYVPADDLTDPSPATTFAHLDATVVLSRQIAERGIYPAIDPLDSTSRQLDPLIIGEEHYRVARGVQETLQRYEELKDIIAILGMDELSEDDKRAVRRARKIQRFLSQPFFVAEVFTGAPGKYVSLQDTIRGFKGIINGEYDELPEQAFYMVGSIEEAVEKAKSL</sequence>
<gene>
    <name evidence="1" type="primary">atpD</name>
    <name type="ordered locus">CBU_1945</name>
</gene>